<proteinExistence type="evidence at protein level"/>
<dbReference type="GO" id="GO:0005576">
    <property type="term" value="C:extracellular region"/>
    <property type="evidence" value="ECO:0007669"/>
    <property type="project" value="UniProtKB-SubCell"/>
</dbReference>
<dbReference type="GO" id="GO:0007218">
    <property type="term" value="P:neuropeptide signaling pathway"/>
    <property type="evidence" value="ECO:0007669"/>
    <property type="project" value="UniProtKB-KW"/>
</dbReference>
<evidence type="ECO:0000269" key="1">
    <source>
    </source>
</evidence>
<evidence type="ECO:0000305" key="2"/>
<accession>P41487</accession>
<keyword id="KW-0027">Amidation</keyword>
<keyword id="KW-0903">Direct protein sequencing</keyword>
<keyword id="KW-0527">Neuropeptide</keyword>
<keyword id="KW-0964">Secreted</keyword>
<sequence>TNRNFLRF</sequence>
<feature type="peptide" id="PRO_0000043695" description="FMRFamide-like neuropeptide 4">
    <location>
        <begin position="1"/>
        <end position="8"/>
    </location>
</feature>
<feature type="modified residue" description="Phenylalanine amide" evidence="1">
    <location>
        <position position="8"/>
    </location>
</feature>
<organism>
    <name type="scientific">Homarus americanus</name>
    <name type="common">American lobster</name>
    <dbReference type="NCBI Taxonomy" id="6706"/>
    <lineage>
        <taxon>Eukaryota</taxon>
        <taxon>Metazoa</taxon>
        <taxon>Ecdysozoa</taxon>
        <taxon>Arthropoda</taxon>
        <taxon>Crustacea</taxon>
        <taxon>Multicrustacea</taxon>
        <taxon>Malacostraca</taxon>
        <taxon>Eumalacostraca</taxon>
        <taxon>Eucarida</taxon>
        <taxon>Decapoda</taxon>
        <taxon>Pleocyemata</taxon>
        <taxon>Astacidea</taxon>
        <taxon>Nephropoidea</taxon>
        <taxon>Nephropidae</taxon>
        <taxon>Homarus</taxon>
    </lineage>
</organism>
<comment type="function">
    <text>Can act as a modulator of exoskeletal and cardiac neuromuscular junctions.</text>
</comment>
<comment type="subcellular location">
    <subcellularLocation>
        <location>Secreted</location>
    </subcellularLocation>
</comment>
<comment type="similarity">
    <text evidence="2">Belongs to the FARP (FMRFamide related peptide) family.</text>
</comment>
<protein>
    <recommendedName>
        <fullName>FMRFamide-like neuropeptide 4</fullName>
        <shortName>FLI 4</shortName>
    </recommendedName>
    <alternativeName>
        <fullName>F1</fullName>
    </alternativeName>
</protein>
<name>FAR4_HOMAM</name>
<reference key="1">
    <citation type="journal article" date="1987" name="J. Comp. Neurol.">
        <title>Purification and characterization of FMRFamidelike immunoreactive substances from the lobster nervous system: isolation and sequence analysis of two closely related peptides.</title>
        <authorList>
            <person name="Trimmer B.A."/>
            <person name="Kobierski L.A."/>
            <person name="Kravitz E.A."/>
        </authorList>
    </citation>
    <scope>PROTEIN SEQUENCE</scope>
    <scope>AMIDATION AT PHE-8</scope>
    <source>
        <tissue>Pericardial organs</tissue>
    </source>
</reference>